<accession>Q2IXQ6</accession>
<gene>
    <name evidence="1" type="primary">rpsS</name>
    <name type="ordered locus">RPB_2299</name>
</gene>
<organism>
    <name type="scientific">Rhodopseudomonas palustris (strain HaA2)</name>
    <dbReference type="NCBI Taxonomy" id="316058"/>
    <lineage>
        <taxon>Bacteria</taxon>
        <taxon>Pseudomonadati</taxon>
        <taxon>Pseudomonadota</taxon>
        <taxon>Alphaproteobacteria</taxon>
        <taxon>Hyphomicrobiales</taxon>
        <taxon>Nitrobacteraceae</taxon>
        <taxon>Rhodopseudomonas</taxon>
    </lineage>
</organism>
<evidence type="ECO:0000255" key="1">
    <source>
        <dbReference type="HAMAP-Rule" id="MF_00531"/>
    </source>
</evidence>
<evidence type="ECO:0000305" key="2"/>
<name>RS19_RHOP2</name>
<keyword id="KW-1185">Reference proteome</keyword>
<keyword id="KW-0687">Ribonucleoprotein</keyword>
<keyword id="KW-0689">Ribosomal protein</keyword>
<keyword id="KW-0694">RNA-binding</keyword>
<keyword id="KW-0699">rRNA-binding</keyword>
<comment type="function">
    <text evidence="1">Protein S19 forms a complex with S13 that binds strongly to the 16S ribosomal RNA.</text>
</comment>
<comment type="similarity">
    <text evidence="1">Belongs to the universal ribosomal protein uS19 family.</text>
</comment>
<proteinExistence type="inferred from homology"/>
<feature type="chain" id="PRO_0000265417" description="Small ribosomal subunit protein uS19">
    <location>
        <begin position="1"/>
        <end position="92"/>
    </location>
</feature>
<sequence>MVRSVWKGPFVEGSLLKKADAARASGRHDVIKIWSRRSTILPQFVGLTFGVYNGQKHVPVAINEEMVGHKFGEFSPTRTFHGHSGDKKSKKG</sequence>
<reference key="1">
    <citation type="submission" date="2006-01" db="EMBL/GenBank/DDBJ databases">
        <title>Complete sequence of Rhodopseudomonas palustris HaA2.</title>
        <authorList>
            <consortium name="US DOE Joint Genome Institute"/>
            <person name="Copeland A."/>
            <person name="Lucas S."/>
            <person name="Lapidus A."/>
            <person name="Barry K."/>
            <person name="Detter J.C."/>
            <person name="Glavina T."/>
            <person name="Hammon N."/>
            <person name="Israni S."/>
            <person name="Pitluck S."/>
            <person name="Chain P."/>
            <person name="Malfatti S."/>
            <person name="Shin M."/>
            <person name="Vergez L."/>
            <person name="Schmutz J."/>
            <person name="Larimer F."/>
            <person name="Land M."/>
            <person name="Hauser L."/>
            <person name="Pelletier D.A."/>
            <person name="Kyrpides N."/>
            <person name="Anderson I."/>
            <person name="Oda Y."/>
            <person name="Harwood C.S."/>
            <person name="Richardson P."/>
        </authorList>
    </citation>
    <scope>NUCLEOTIDE SEQUENCE [LARGE SCALE GENOMIC DNA]</scope>
    <source>
        <strain>HaA2</strain>
    </source>
</reference>
<dbReference type="EMBL" id="CP000250">
    <property type="protein sequence ID" value="ABD07004.1"/>
    <property type="molecule type" value="Genomic_DNA"/>
</dbReference>
<dbReference type="RefSeq" id="WP_011441189.1">
    <property type="nucleotide sequence ID" value="NC_007778.1"/>
</dbReference>
<dbReference type="SMR" id="Q2IXQ6"/>
<dbReference type="STRING" id="316058.RPB_2299"/>
<dbReference type="KEGG" id="rpb:RPB_2299"/>
<dbReference type="eggNOG" id="COG0185">
    <property type="taxonomic scope" value="Bacteria"/>
</dbReference>
<dbReference type="HOGENOM" id="CLU_144911_0_1_5"/>
<dbReference type="OrthoDB" id="9797833at2"/>
<dbReference type="Proteomes" id="UP000008809">
    <property type="component" value="Chromosome"/>
</dbReference>
<dbReference type="GO" id="GO:0005737">
    <property type="term" value="C:cytoplasm"/>
    <property type="evidence" value="ECO:0007669"/>
    <property type="project" value="UniProtKB-ARBA"/>
</dbReference>
<dbReference type="GO" id="GO:0015935">
    <property type="term" value="C:small ribosomal subunit"/>
    <property type="evidence" value="ECO:0007669"/>
    <property type="project" value="InterPro"/>
</dbReference>
<dbReference type="GO" id="GO:0019843">
    <property type="term" value="F:rRNA binding"/>
    <property type="evidence" value="ECO:0007669"/>
    <property type="project" value="UniProtKB-UniRule"/>
</dbReference>
<dbReference type="GO" id="GO:0003735">
    <property type="term" value="F:structural constituent of ribosome"/>
    <property type="evidence" value="ECO:0007669"/>
    <property type="project" value="InterPro"/>
</dbReference>
<dbReference type="GO" id="GO:0000028">
    <property type="term" value="P:ribosomal small subunit assembly"/>
    <property type="evidence" value="ECO:0007669"/>
    <property type="project" value="TreeGrafter"/>
</dbReference>
<dbReference type="GO" id="GO:0006412">
    <property type="term" value="P:translation"/>
    <property type="evidence" value="ECO:0007669"/>
    <property type="project" value="UniProtKB-UniRule"/>
</dbReference>
<dbReference type="FunFam" id="3.30.860.10:FF:000001">
    <property type="entry name" value="30S ribosomal protein S19"/>
    <property type="match status" value="1"/>
</dbReference>
<dbReference type="Gene3D" id="3.30.860.10">
    <property type="entry name" value="30s Ribosomal Protein S19, Chain A"/>
    <property type="match status" value="1"/>
</dbReference>
<dbReference type="HAMAP" id="MF_00531">
    <property type="entry name" value="Ribosomal_uS19"/>
    <property type="match status" value="1"/>
</dbReference>
<dbReference type="InterPro" id="IPR002222">
    <property type="entry name" value="Ribosomal_uS19"/>
</dbReference>
<dbReference type="InterPro" id="IPR005732">
    <property type="entry name" value="Ribosomal_uS19_bac-type"/>
</dbReference>
<dbReference type="InterPro" id="IPR020934">
    <property type="entry name" value="Ribosomal_uS19_CS"/>
</dbReference>
<dbReference type="InterPro" id="IPR023575">
    <property type="entry name" value="Ribosomal_uS19_SF"/>
</dbReference>
<dbReference type="NCBIfam" id="TIGR01050">
    <property type="entry name" value="rpsS_bact"/>
    <property type="match status" value="1"/>
</dbReference>
<dbReference type="PANTHER" id="PTHR11880">
    <property type="entry name" value="RIBOSOMAL PROTEIN S19P FAMILY MEMBER"/>
    <property type="match status" value="1"/>
</dbReference>
<dbReference type="PANTHER" id="PTHR11880:SF8">
    <property type="entry name" value="SMALL RIBOSOMAL SUBUNIT PROTEIN US19M"/>
    <property type="match status" value="1"/>
</dbReference>
<dbReference type="Pfam" id="PF00203">
    <property type="entry name" value="Ribosomal_S19"/>
    <property type="match status" value="1"/>
</dbReference>
<dbReference type="PIRSF" id="PIRSF002144">
    <property type="entry name" value="Ribosomal_S19"/>
    <property type="match status" value="1"/>
</dbReference>
<dbReference type="PRINTS" id="PR00975">
    <property type="entry name" value="RIBOSOMALS19"/>
</dbReference>
<dbReference type="SUPFAM" id="SSF54570">
    <property type="entry name" value="Ribosomal protein S19"/>
    <property type="match status" value="1"/>
</dbReference>
<dbReference type="PROSITE" id="PS00323">
    <property type="entry name" value="RIBOSOMAL_S19"/>
    <property type="match status" value="1"/>
</dbReference>
<protein>
    <recommendedName>
        <fullName evidence="1">Small ribosomal subunit protein uS19</fullName>
    </recommendedName>
    <alternativeName>
        <fullName evidence="2">30S ribosomal protein S19</fullName>
    </alternativeName>
</protein>